<feature type="chain" id="PRO_1000191831" description="NAD-capped RNA hydrolase NudC">
    <location>
        <begin position="1"/>
        <end position="265"/>
    </location>
</feature>
<feature type="domain" description="Nudix hydrolase" evidence="1">
    <location>
        <begin position="133"/>
        <end position="256"/>
    </location>
</feature>
<feature type="short sequence motif" description="Nudix box" evidence="1">
    <location>
        <begin position="167"/>
        <end position="188"/>
    </location>
</feature>
<feature type="binding site" evidence="1">
    <location>
        <position position="76"/>
    </location>
    <ligand>
        <name>substrate</name>
    </ligand>
</feature>
<feature type="binding site" evidence="1">
    <location>
        <position position="106"/>
    </location>
    <ligand>
        <name>Zn(2+)</name>
        <dbReference type="ChEBI" id="CHEBI:29105"/>
    </ligand>
</feature>
<feature type="binding site" evidence="1">
    <location>
        <position position="109"/>
    </location>
    <ligand>
        <name>Zn(2+)</name>
        <dbReference type="ChEBI" id="CHEBI:29105"/>
    </ligand>
</feature>
<feature type="binding site" evidence="1">
    <location>
        <position position="124"/>
    </location>
    <ligand>
        <name>Zn(2+)</name>
        <dbReference type="ChEBI" id="CHEBI:29105"/>
    </ligand>
</feature>
<feature type="binding site" evidence="1">
    <location>
        <position position="127"/>
    </location>
    <ligand>
        <name>Zn(2+)</name>
        <dbReference type="ChEBI" id="CHEBI:29105"/>
    </ligand>
</feature>
<feature type="binding site" evidence="1">
    <location>
        <position position="132"/>
    </location>
    <ligand>
        <name>substrate</name>
    </ligand>
</feature>
<feature type="binding site" evidence="1">
    <location>
        <position position="166"/>
    </location>
    <ligand>
        <name>a divalent metal cation</name>
        <dbReference type="ChEBI" id="CHEBI:60240"/>
        <label>1</label>
    </ligand>
</feature>
<feature type="binding site" evidence="1">
    <location>
        <position position="182"/>
    </location>
    <ligand>
        <name>a divalent metal cation</name>
        <dbReference type="ChEBI" id="CHEBI:60240"/>
        <label>2</label>
    </ligand>
</feature>
<feature type="binding site" evidence="1">
    <location>
        <position position="182"/>
    </location>
    <ligand>
        <name>a divalent metal cation</name>
        <dbReference type="ChEBI" id="CHEBI:60240"/>
        <label>3</label>
    </ligand>
</feature>
<feature type="binding site" evidence="1">
    <location>
        <position position="186"/>
    </location>
    <ligand>
        <name>a divalent metal cation</name>
        <dbReference type="ChEBI" id="CHEBI:60240"/>
        <label>1</label>
    </ligand>
</feature>
<feature type="binding site" evidence="1">
    <location>
        <position position="186"/>
    </location>
    <ligand>
        <name>a divalent metal cation</name>
        <dbReference type="ChEBI" id="CHEBI:60240"/>
        <label>3</label>
    </ligand>
</feature>
<feature type="binding site" evidence="1">
    <location>
        <begin position="200"/>
        <end position="207"/>
    </location>
    <ligand>
        <name>substrate</name>
    </ligand>
</feature>
<feature type="binding site" evidence="1">
    <location>
        <position position="227"/>
    </location>
    <ligand>
        <name>a divalent metal cation</name>
        <dbReference type="ChEBI" id="CHEBI:60240"/>
        <label>1</label>
    </ligand>
</feature>
<feature type="binding site" evidence="1">
    <location>
        <position position="227"/>
    </location>
    <ligand>
        <name>a divalent metal cation</name>
        <dbReference type="ChEBI" id="CHEBI:60240"/>
        <label>3</label>
    </ligand>
</feature>
<feature type="binding site" evidence="1">
    <location>
        <position position="249"/>
    </location>
    <ligand>
        <name>substrate</name>
    </ligand>
</feature>
<keyword id="KW-0378">Hydrolase</keyword>
<keyword id="KW-0460">Magnesium</keyword>
<keyword id="KW-0464">Manganese</keyword>
<keyword id="KW-0479">Metal-binding</keyword>
<keyword id="KW-0520">NAD</keyword>
<keyword id="KW-1185">Reference proteome</keyword>
<keyword id="KW-0862">Zinc</keyword>
<comment type="function">
    <text evidence="1">mRNA decapping enzyme that specifically removes the nicotinamide adenine dinucleotide (NAD) cap from a subset of mRNAs by hydrolyzing the diphosphate linkage to produce nicotinamide mononucleotide (NMN) and 5' monophosphate mRNA. The NAD-cap is present at the 5'-end of some mRNAs and stabilizes RNA against 5'-processing. Has preference for mRNAs with a 5'-end purine. Catalyzes the hydrolysis of a broad range of dinucleotide pyrophosphates.</text>
</comment>
<comment type="catalytic activity">
    <reaction evidence="1">
        <text>a 5'-end NAD(+)-phospho-ribonucleoside in mRNA + H2O = a 5'-end phospho-adenosine-phospho-ribonucleoside in mRNA + beta-nicotinamide D-ribonucleotide + 2 H(+)</text>
        <dbReference type="Rhea" id="RHEA:60876"/>
        <dbReference type="Rhea" id="RHEA-COMP:15698"/>
        <dbReference type="Rhea" id="RHEA-COMP:15719"/>
        <dbReference type="ChEBI" id="CHEBI:14649"/>
        <dbReference type="ChEBI" id="CHEBI:15377"/>
        <dbReference type="ChEBI" id="CHEBI:15378"/>
        <dbReference type="ChEBI" id="CHEBI:144029"/>
        <dbReference type="ChEBI" id="CHEBI:144051"/>
    </reaction>
    <physiologicalReaction direction="left-to-right" evidence="1">
        <dbReference type="Rhea" id="RHEA:60877"/>
    </physiologicalReaction>
</comment>
<comment type="catalytic activity">
    <reaction evidence="1">
        <text>NAD(+) + H2O = beta-nicotinamide D-ribonucleotide + AMP + 2 H(+)</text>
        <dbReference type="Rhea" id="RHEA:11800"/>
        <dbReference type="ChEBI" id="CHEBI:14649"/>
        <dbReference type="ChEBI" id="CHEBI:15377"/>
        <dbReference type="ChEBI" id="CHEBI:15378"/>
        <dbReference type="ChEBI" id="CHEBI:57540"/>
        <dbReference type="ChEBI" id="CHEBI:456215"/>
        <dbReference type="EC" id="3.6.1.22"/>
    </reaction>
</comment>
<comment type="catalytic activity">
    <reaction evidence="1">
        <text>NADH + H2O = reduced beta-nicotinamide D-ribonucleotide + AMP + 2 H(+)</text>
        <dbReference type="Rhea" id="RHEA:48868"/>
        <dbReference type="ChEBI" id="CHEBI:15377"/>
        <dbReference type="ChEBI" id="CHEBI:15378"/>
        <dbReference type="ChEBI" id="CHEBI:57945"/>
        <dbReference type="ChEBI" id="CHEBI:90832"/>
        <dbReference type="ChEBI" id="CHEBI:456215"/>
        <dbReference type="EC" id="3.6.1.22"/>
    </reaction>
</comment>
<comment type="cofactor">
    <cofactor evidence="1">
        <name>Mg(2+)</name>
        <dbReference type="ChEBI" id="CHEBI:18420"/>
    </cofactor>
    <cofactor evidence="1">
        <name>Mn(2+)</name>
        <dbReference type="ChEBI" id="CHEBI:29035"/>
    </cofactor>
    <text evidence="1">Divalent metal cations. Mg(2+) or Mn(2+).</text>
</comment>
<comment type="cofactor">
    <cofactor evidence="1">
        <name>Zn(2+)</name>
        <dbReference type="ChEBI" id="CHEBI:29105"/>
    </cofactor>
    <text evidence="1">Binds 1 zinc ion per subunit.</text>
</comment>
<comment type="subunit">
    <text evidence="1">Homodimer.</text>
</comment>
<comment type="similarity">
    <text evidence="1">Belongs to the Nudix hydrolase family. NudC subfamily.</text>
</comment>
<name>NUDC_CHRVO</name>
<proteinExistence type="inferred from homology"/>
<gene>
    <name evidence="1" type="primary">nudC</name>
    <name type="ordered locus">CV_2905</name>
</gene>
<organism>
    <name type="scientific">Chromobacterium violaceum (strain ATCC 12472 / DSM 30191 / JCM 1249 / CCUG 213 / NBRC 12614 / NCIMB 9131 / NCTC 9757 / MK)</name>
    <dbReference type="NCBI Taxonomy" id="243365"/>
    <lineage>
        <taxon>Bacteria</taxon>
        <taxon>Pseudomonadati</taxon>
        <taxon>Pseudomonadota</taxon>
        <taxon>Betaproteobacteria</taxon>
        <taxon>Neisseriales</taxon>
        <taxon>Chromobacteriaceae</taxon>
        <taxon>Chromobacterium</taxon>
    </lineage>
</organism>
<evidence type="ECO:0000255" key="1">
    <source>
        <dbReference type="HAMAP-Rule" id="MF_00297"/>
    </source>
</evidence>
<reference key="1">
    <citation type="journal article" date="2003" name="Proc. Natl. Acad. Sci. U.S.A.">
        <title>The complete genome sequence of Chromobacterium violaceum reveals remarkable and exploitable bacterial adaptability.</title>
        <authorList>
            <person name="Vasconcelos A.T.R."/>
            <person name="de Almeida D.F."/>
            <person name="Hungria M."/>
            <person name="Guimaraes C.T."/>
            <person name="Antonio R.V."/>
            <person name="Almeida F.C."/>
            <person name="de Almeida L.G.P."/>
            <person name="de Almeida R."/>
            <person name="Alves-Gomes J.A."/>
            <person name="Andrade E.M."/>
            <person name="Araripe J."/>
            <person name="de Araujo M.F.F."/>
            <person name="Astolfi-Filho S."/>
            <person name="Azevedo V."/>
            <person name="Baptista A.J."/>
            <person name="Bataus L.A.M."/>
            <person name="Batista J.S."/>
            <person name="Belo A."/>
            <person name="van den Berg C."/>
            <person name="Bogo M."/>
            <person name="Bonatto S."/>
            <person name="Bordignon J."/>
            <person name="Brigido M.M."/>
            <person name="Brito C.A."/>
            <person name="Brocchi M."/>
            <person name="Burity H.A."/>
            <person name="Camargo A.A."/>
            <person name="Cardoso D.D.P."/>
            <person name="Carneiro N.P."/>
            <person name="Carraro D.M."/>
            <person name="Carvalho C.M.B."/>
            <person name="Cascardo J.C.M."/>
            <person name="Cavada B.S."/>
            <person name="Chueire L.M.O."/>
            <person name="Creczynski-Pasa T.B."/>
            <person name="Cunha-Junior N.C."/>
            <person name="Fagundes N."/>
            <person name="Falcao C.L."/>
            <person name="Fantinatti F."/>
            <person name="Farias I.P."/>
            <person name="Felipe M.S.S."/>
            <person name="Ferrari L.P."/>
            <person name="Ferro J.A."/>
            <person name="Ferro M.I.T."/>
            <person name="Franco G.R."/>
            <person name="Freitas N.S.A."/>
            <person name="Furlan L.R."/>
            <person name="Gazzinelli R.T."/>
            <person name="Gomes E.A."/>
            <person name="Goncalves P.R."/>
            <person name="Grangeiro T.B."/>
            <person name="Grattapaglia D."/>
            <person name="Grisard E.C."/>
            <person name="Hanna E.S."/>
            <person name="Jardim S.N."/>
            <person name="Laurino J."/>
            <person name="Leoi L.C.T."/>
            <person name="Lima L.F.A."/>
            <person name="Loureiro M.F."/>
            <person name="Lyra M.C.C.P."/>
            <person name="Madeira H.M.F."/>
            <person name="Manfio G.P."/>
            <person name="Maranhao A.Q."/>
            <person name="Martins W.S."/>
            <person name="di Mauro S.M.Z."/>
            <person name="de Medeiros S.R.B."/>
            <person name="Meissner R.V."/>
            <person name="Moreira M.A.M."/>
            <person name="Nascimento F.F."/>
            <person name="Nicolas M.F."/>
            <person name="Oliveira J.G."/>
            <person name="Oliveira S.C."/>
            <person name="Paixao R.F.C."/>
            <person name="Parente J.A."/>
            <person name="Pedrosa F.O."/>
            <person name="Pena S.D.J."/>
            <person name="Pereira J.O."/>
            <person name="Pereira M."/>
            <person name="Pinto L.S.R.C."/>
            <person name="Pinto L.S."/>
            <person name="Porto J.I.R."/>
            <person name="Potrich D.P."/>
            <person name="Ramalho-Neto C.E."/>
            <person name="Reis A.M.M."/>
            <person name="Rigo L.U."/>
            <person name="Rondinelli E."/>
            <person name="Santos E.B.P."/>
            <person name="Santos F.R."/>
            <person name="Schneider M.P.C."/>
            <person name="Seuanez H.N."/>
            <person name="Silva A.M.R."/>
            <person name="da Silva A.L.C."/>
            <person name="Silva D.W."/>
            <person name="Silva R."/>
            <person name="Simoes I.C."/>
            <person name="Simon D."/>
            <person name="Soares C.M.A."/>
            <person name="Soares R.B.A."/>
            <person name="Souza E.M."/>
            <person name="Souza K.R.L."/>
            <person name="Souza R.C."/>
            <person name="Steffens M.B.R."/>
            <person name="Steindel M."/>
            <person name="Teixeira S.R."/>
            <person name="Urmenyi T."/>
            <person name="Vettore A."/>
            <person name="Wassem R."/>
            <person name="Zaha A."/>
            <person name="Simpson A.J.G."/>
        </authorList>
    </citation>
    <scope>NUCLEOTIDE SEQUENCE [LARGE SCALE GENOMIC DNA]</scope>
    <source>
        <strain>ATCC 12472 / DSM 30191 / JCM 1249 / CCUG 213 / NBRC 12614 / NCIMB 9131 / NCTC 9757 / MK</strain>
    </source>
</reference>
<protein>
    <recommendedName>
        <fullName evidence="1">NAD-capped RNA hydrolase NudC</fullName>
        <shortName evidence="1">DeNADding enzyme NudC</shortName>
        <ecNumber evidence="1">3.6.1.-</ecNumber>
    </recommendedName>
    <alternativeName>
        <fullName evidence="1">NADH pyrophosphatase</fullName>
        <ecNumber evidence="1">3.6.1.22</ecNumber>
    </alternativeName>
</protein>
<dbReference type="EC" id="3.6.1.-" evidence="1"/>
<dbReference type="EC" id="3.6.1.22" evidence="1"/>
<dbReference type="EMBL" id="AE016825">
    <property type="protein sequence ID" value="AAQ60573.1"/>
    <property type="molecule type" value="Genomic_DNA"/>
</dbReference>
<dbReference type="RefSeq" id="WP_011136452.1">
    <property type="nucleotide sequence ID" value="NC_005085.1"/>
</dbReference>
<dbReference type="SMR" id="Q7NTZ8"/>
<dbReference type="STRING" id="243365.CV_2905"/>
<dbReference type="KEGG" id="cvi:CV_2905"/>
<dbReference type="eggNOG" id="COG2816">
    <property type="taxonomic scope" value="Bacteria"/>
</dbReference>
<dbReference type="HOGENOM" id="CLU_037162_0_1_4"/>
<dbReference type="OrthoDB" id="9791656at2"/>
<dbReference type="Proteomes" id="UP000001424">
    <property type="component" value="Chromosome"/>
</dbReference>
<dbReference type="GO" id="GO:0000287">
    <property type="term" value="F:magnesium ion binding"/>
    <property type="evidence" value="ECO:0007669"/>
    <property type="project" value="UniProtKB-UniRule"/>
</dbReference>
<dbReference type="GO" id="GO:0030145">
    <property type="term" value="F:manganese ion binding"/>
    <property type="evidence" value="ECO:0007669"/>
    <property type="project" value="UniProtKB-UniRule"/>
</dbReference>
<dbReference type="GO" id="GO:0000210">
    <property type="term" value="F:NAD+ diphosphatase activity"/>
    <property type="evidence" value="ECO:0007669"/>
    <property type="project" value="UniProtKB-UniRule"/>
</dbReference>
<dbReference type="GO" id="GO:0035529">
    <property type="term" value="F:NADH pyrophosphatase activity"/>
    <property type="evidence" value="ECO:0007669"/>
    <property type="project" value="RHEA"/>
</dbReference>
<dbReference type="GO" id="GO:0110153">
    <property type="term" value="F:RNA NAD-cap (NMN-forming) hydrolase activity"/>
    <property type="evidence" value="ECO:0007669"/>
    <property type="project" value="RHEA"/>
</dbReference>
<dbReference type="GO" id="GO:0008270">
    <property type="term" value="F:zinc ion binding"/>
    <property type="evidence" value="ECO:0007669"/>
    <property type="project" value="UniProtKB-UniRule"/>
</dbReference>
<dbReference type="CDD" id="cd03429">
    <property type="entry name" value="NUDIX_NADH_pyrophosphatase_Nudt13"/>
    <property type="match status" value="1"/>
</dbReference>
<dbReference type="Gene3D" id="3.90.79.20">
    <property type="match status" value="1"/>
</dbReference>
<dbReference type="Gene3D" id="3.90.79.10">
    <property type="entry name" value="Nucleoside Triphosphate Pyrophosphohydrolase"/>
    <property type="match status" value="1"/>
</dbReference>
<dbReference type="HAMAP" id="MF_00297">
    <property type="entry name" value="Nudix_NudC"/>
    <property type="match status" value="1"/>
</dbReference>
<dbReference type="InterPro" id="IPR015375">
    <property type="entry name" value="NADH_PPase-like_N"/>
</dbReference>
<dbReference type="InterPro" id="IPR049734">
    <property type="entry name" value="NudC-like_C"/>
</dbReference>
<dbReference type="InterPro" id="IPR015797">
    <property type="entry name" value="NUDIX_hydrolase-like_dom_sf"/>
</dbReference>
<dbReference type="InterPro" id="IPR020084">
    <property type="entry name" value="NUDIX_hydrolase_CS"/>
</dbReference>
<dbReference type="InterPro" id="IPR000086">
    <property type="entry name" value="NUDIX_hydrolase_dom"/>
</dbReference>
<dbReference type="InterPro" id="IPR022925">
    <property type="entry name" value="RNA_Hydrolase_NudC"/>
</dbReference>
<dbReference type="InterPro" id="IPR015376">
    <property type="entry name" value="Znr_NADH_PPase"/>
</dbReference>
<dbReference type="NCBIfam" id="NF001299">
    <property type="entry name" value="PRK00241.1"/>
    <property type="match status" value="1"/>
</dbReference>
<dbReference type="PANTHER" id="PTHR11383:SF3">
    <property type="entry name" value="NAD(P)H PYROPHOSPHATASE NUDT13, MITOCHONDRIAL"/>
    <property type="match status" value="1"/>
</dbReference>
<dbReference type="PANTHER" id="PTHR11383">
    <property type="entry name" value="NUCLEOSIDE DIPHOSPHATE-LINKED MOIETY X MOTIF 13"/>
    <property type="match status" value="1"/>
</dbReference>
<dbReference type="Pfam" id="PF00293">
    <property type="entry name" value="NUDIX"/>
    <property type="match status" value="1"/>
</dbReference>
<dbReference type="Pfam" id="PF09296">
    <property type="entry name" value="NUDIX-like"/>
    <property type="match status" value="1"/>
</dbReference>
<dbReference type="Pfam" id="PF09297">
    <property type="entry name" value="Zn_ribbon_NUD"/>
    <property type="match status" value="1"/>
</dbReference>
<dbReference type="SUPFAM" id="SSF55811">
    <property type="entry name" value="Nudix"/>
    <property type="match status" value="2"/>
</dbReference>
<dbReference type="PROSITE" id="PS51462">
    <property type="entry name" value="NUDIX"/>
    <property type="match status" value="1"/>
</dbReference>
<dbReference type="PROSITE" id="PS00893">
    <property type="entry name" value="NUDIX_BOX"/>
    <property type="match status" value="1"/>
</dbReference>
<accession>Q7NTZ8</accession>
<sequence>MPFELPQQPAPELPERWCVFNGSLLWLQDNQLPAQPPAGCALTGQRFLGIHEGSNLFLADLVGDMPAQAGEWLPLRPALLAMPMAQVQAAARAAQLRQFFHSHRFCGHCATPLAVSADQLGRHCPSCGQVYYPRISPAMMVLVRRGRELLLARSPHFAPGMYSALAGFVEPGETLEECVHRETWEEVGVKVKNLRYAFSQSWPFPHSLMLAFIAEYDGGDIRPQEGEIEDAGWFDIDALPGLPMPISIAHRLIRHACDRIRDLEA</sequence>